<sequence>MTTEPNSPFVDDPLSAVDARILGSLVEKQATTPETYPLTLNALVLACNQKTSREPVMNLTPGQVGQSLRQLEGRGLVKLVMGSRADRWEHTLGKGLELVAPQVALLGLLFLRGPQTLNELLTRSNRLHDFDDVEQIRHHLERLAGRGLAVHLERRAGQREDRYMHLLGSQADLEAAVAAMGSDPERAAPAALSADAEARIAELETRLAALEERLTRLEGGV</sequence>
<evidence type="ECO:0000255" key="1">
    <source>
        <dbReference type="HAMAP-Rule" id="MF_01584"/>
    </source>
</evidence>
<dbReference type="EMBL" id="CP000744">
    <property type="protein sequence ID" value="ABR84518.1"/>
    <property type="molecule type" value="Genomic_DNA"/>
</dbReference>
<dbReference type="RefSeq" id="WP_012074820.1">
    <property type="nucleotide sequence ID" value="NC_009656.1"/>
</dbReference>
<dbReference type="SMR" id="A6V1X3"/>
<dbReference type="KEGG" id="pap:PSPA7_1674"/>
<dbReference type="HOGENOM" id="CLU_057831_2_0_6"/>
<dbReference type="Proteomes" id="UP000001582">
    <property type="component" value="Chromosome"/>
</dbReference>
<dbReference type="Gene3D" id="1.10.10.10">
    <property type="entry name" value="Winged helix-like DNA-binding domain superfamily/Winged helix DNA-binding domain"/>
    <property type="match status" value="2"/>
</dbReference>
<dbReference type="HAMAP" id="MF_01584">
    <property type="entry name" value="UPF0502"/>
    <property type="match status" value="1"/>
</dbReference>
<dbReference type="InterPro" id="IPR007432">
    <property type="entry name" value="DUF480"/>
</dbReference>
<dbReference type="InterPro" id="IPR036388">
    <property type="entry name" value="WH-like_DNA-bd_sf"/>
</dbReference>
<dbReference type="InterPro" id="IPR036390">
    <property type="entry name" value="WH_DNA-bd_sf"/>
</dbReference>
<dbReference type="PANTHER" id="PTHR38768">
    <property type="entry name" value="UPF0502 PROTEIN YCEH"/>
    <property type="match status" value="1"/>
</dbReference>
<dbReference type="PANTHER" id="PTHR38768:SF1">
    <property type="entry name" value="UPF0502 PROTEIN YCEH"/>
    <property type="match status" value="1"/>
</dbReference>
<dbReference type="Pfam" id="PF04337">
    <property type="entry name" value="DUF480"/>
    <property type="match status" value="1"/>
</dbReference>
<dbReference type="SUPFAM" id="SSF46785">
    <property type="entry name" value="Winged helix' DNA-binding domain"/>
    <property type="match status" value="2"/>
</dbReference>
<feature type="chain" id="PRO_1000069299" description="UPF0502 protein PSPA7_1674">
    <location>
        <begin position="1"/>
        <end position="221"/>
    </location>
</feature>
<organism>
    <name type="scientific">Pseudomonas paraeruginosa (strain DSM 24068 / PA7)</name>
    <name type="common">Pseudomonas aeruginosa (strain PA7)</name>
    <dbReference type="NCBI Taxonomy" id="381754"/>
    <lineage>
        <taxon>Bacteria</taxon>
        <taxon>Pseudomonadati</taxon>
        <taxon>Pseudomonadota</taxon>
        <taxon>Gammaproteobacteria</taxon>
        <taxon>Pseudomonadales</taxon>
        <taxon>Pseudomonadaceae</taxon>
        <taxon>Pseudomonas</taxon>
        <taxon>Pseudomonas paraeruginosa</taxon>
    </lineage>
</organism>
<name>Y1674_PSEP7</name>
<gene>
    <name type="ordered locus">PSPA7_1674</name>
</gene>
<comment type="similarity">
    <text evidence="1">Belongs to the UPF0502 family.</text>
</comment>
<proteinExistence type="inferred from homology"/>
<reference key="1">
    <citation type="submission" date="2007-06" db="EMBL/GenBank/DDBJ databases">
        <authorList>
            <person name="Dodson R.J."/>
            <person name="Harkins D."/>
            <person name="Paulsen I.T."/>
        </authorList>
    </citation>
    <scope>NUCLEOTIDE SEQUENCE [LARGE SCALE GENOMIC DNA]</scope>
    <source>
        <strain>DSM 24068 / PA7</strain>
    </source>
</reference>
<accession>A6V1X3</accession>
<protein>
    <recommendedName>
        <fullName evidence="1">UPF0502 protein PSPA7_1674</fullName>
    </recommendedName>
</protein>